<organism>
    <name type="scientific">Coturnix japonica</name>
    <name type="common">Japanese quail</name>
    <name type="synonym">Coturnix coturnix japonica</name>
    <dbReference type="NCBI Taxonomy" id="93934"/>
    <lineage>
        <taxon>Eukaryota</taxon>
        <taxon>Metazoa</taxon>
        <taxon>Chordata</taxon>
        <taxon>Craniata</taxon>
        <taxon>Vertebrata</taxon>
        <taxon>Euteleostomi</taxon>
        <taxon>Archelosauria</taxon>
        <taxon>Archosauria</taxon>
        <taxon>Dinosauria</taxon>
        <taxon>Saurischia</taxon>
        <taxon>Theropoda</taxon>
        <taxon>Coelurosauria</taxon>
        <taxon>Aves</taxon>
        <taxon>Neognathae</taxon>
        <taxon>Galloanserae</taxon>
        <taxon>Galliformes</taxon>
        <taxon>Phasianidae</taxon>
        <taxon>Perdicinae</taxon>
        <taxon>Coturnix</taxon>
    </lineage>
</organism>
<comment type="function">
    <text evidence="1 2">Subunit 8, of the mitochondrial membrane ATP synthase complex (F(1)F(0) ATP synthase or Complex V) that produces ATP from ADP in the presence of a proton gradient across the membrane which is generated by electron transport complexes of the respiratory chain. ATP synthase complex consist of a soluble F(1) head domain - the catalytic core - and a membrane F(1) domain - the membrane proton channel. These two domains are linked by a central stalk rotating inside the F(1) region and a stationary peripheral stalk. During catalysis, ATP synthesis in the catalytic domain of F(1) is coupled via a rotary mechanism of the central stalk subunits to proton translocation (By similarity). In vivo, can only synthesize ATP although its ATP hydrolase activity can be activated artificially in vitro (By similarity). Part of the complex F(0) domain (By similarity).</text>
</comment>
<comment type="subunit">
    <text evidence="1">Component of the ATP synthase complex composed at least of ATP5F1A/subunit alpha, ATP5F1B/subunit beta, ATP5MC1/subunit c (homooctomer), MT-ATP6/subunit a, MT-ATP8/subunit 8, ATP5ME/subunit e, ATP5MF/subunit f, ATP5MG/subunit g, ATP5MK/subunit k, ATP5MJ/subunit j, ATP5F1C/subunit gamma, ATP5F1D/subunit delta, ATP5F1E/subunit epsilon, ATP5PF/subunit F6, ATP5PB/subunit b, ATP5PD/subunit d, ATP5PO/subunit OSCP. ATP synthase complex consists of a soluble F(1) head domain (subunits alpha(3) and beta(3)) - the catalytic core - and a membrane F(0) domain - the membrane proton channel (subunits c, a, 8, e, f, g, k and j). These two domains are linked by a central stalk (subunits gamma, delta, and epsilon) rotating inside the F1 region and a stationary peripheral stalk (subunits F6, b, d, and OSCP).</text>
</comment>
<comment type="subcellular location">
    <subcellularLocation>
        <location>Mitochondrion membrane</location>
        <topology>Single-pass membrane protein</topology>
    </subcellularLocation>
</comment>
<comment type="similarity">
    <text evidence="4">Belongs to the ATPase protein 8 family.</text>
</comment>
<proteinExistence type="inferred from homology"/>
<geneLocation type="mitochondrion"/>
<reference key="1">
    <citation type="submission" date="1995-09" db="EMBL/GenBank/DDBJ databases">
        <title>Nucleotide sequence of mitochondrial genes for COI, tRNAs Lys, Asp, Ser (UCN), COII and ATPases 8 and 6 of the quail Coturnix japonica.</title>
        <authorList>
            <person name="Ramirez V."/>
            <person name="Morais R."/>
        </authorList>
    </citation>
    <scope>NUCLEOTIDE SEQUENCE [GENOMIC DNA]</scope>
    <source>
        <tissue>Liver</tissue>
    </source>
</reference>
<reference key="2">
    <citation type="journal article" date="2001" name="Anim. Genet.">
        <title>Complete sequence of the Japanese quail (Coturnix japonica) mitochondrial genome and its genetic relationship with related species.</title>
        <authorList>
            <person name="Nishibori M."/>
            <person name="Hayashi T."/>
            <person name="Tsudzuki M."/>
            <person name="Yamamoto Y."/>
            <person name="Yasue H."/>
        </authorList>
    </citation>
    <scope>NUCLEOTIDE SEQUENCE [GENOMIC DNA]</scope>
    <source>
        <tissue>Blood</tissue>
    </source>
</reference>
<evidence type="ECO:0000250" key="1">
    <source>
        <dbReference type="UniProtKB" id="P03928"/>
    </source>
</evidence>
<evidence type="ECO:0000250" key="2">
    <source>
        <dbReference type="UniProtKB" id="P19483"/>
    </source>
</evidence>
<evidence type="ECO:0000255" key="3"/>
<evidence type="ECO:0000305" key="4"/>
<sequence length="55" mass="6494">MPQLNPAPWFMIMLMTWFTYSLLIQPKLLSFTSMNTPSNKTTSTTKPTPWTWPWT</sequence>
<feature type="chain" id="PRO_0000195514" description="ATP synthase F(0) complex subunit 8">
    <location>
        <begin position="1"/>
        <end position="55"/>
    </location>
</feature>
<feature type="transmembrane region" description="Helical" evidence="3">
    <location>
        <begin position="8"/>
        <end position="24"/>
    </location>
</feature>
<protein>
    <recommendedName>
        <fullName evidence="1">ATP synthase F(0) complex subunit 8</fullName>
    </recommendedName>
    <alternativeName>
        <fullName>A6L</fullName>
    </alternativeName>
    <alternativeName>
        <fullName>F-ATPase subunit 8</fullName>
    </alternativeName>
</protein>
<keyword id="KW-0066">ATP synthesis</keyword>
<keyword id="KW-0138">CF(0)</keyword>
<keyword id="KW-0375">Hydrogen ion transport</keyword>
<keyword id="KW-0406">Ion transport</keyword>
<keyword id="KW-0472">Membrane</keyword>
<keyword id="KW-0496">Mitochondrion</keyword>
<keyword id="KW-1185">Reference proteome</keyword>
<keyword id="KW-0812">Transmembrane</keyword>
<keyword id="KW-1133">Transmembrane helix</keyword>
<keyword id="KW-0813">Transport</keyword>
<gene>
    <name evidence="1" type="primary">MT-ATP8</name>
    <name type="synonym">ATP8</name>
    <name type="synonym">ATPASE8</name>
    <name type="synonym">MTATP8</name>
</gene>
<dbReference type="EMBL" id="U36794">
    <property type="protein sequence ID" value="AAA76731.1"/>
    <property type="molecule type" value="Genomic_DNA"/>
</dbReference>
<dbReference type="EMBL" id="AP003195">
    <property type="protein sequence ID" value="BAB62919.1"/>
    <property type="molecule type" value="Genomic_DNA"/>
</dbReference>
<dbReference type="RefSeq" id="NP_572018.1">
    <property type="nucleotide sequence ID" value="NC_003408.1"/>
</dbReference>
<dbReference type="SMR" id="P50682"/>
<dbReference type="Ensembl" id="ENSCJPT00005000022.1">
    <property type="protein sequence ID" value="ENSCJPP00005000006.1"/>
    <property type="gene ID" value="ENSCJPG00005000022.1"/>
</dbReference>
<dbReference type="GeneID" id="804669"/>
<dbReference type="KEGG" id="cjo:804669"/>
<dbReference type="CTD" id="4509"/>
<dbReference type="GeneTree" id="ENSGT00730000112785"/>
<dbReference type="OrthoDB" id="8734014at2759"/>
<dbReference type="Proteomes" id="UP000694412">
    <property type="component" value="Unassembled WGS sequence"/>
</dbReference>
<dbReference type="GO" id="GO:0031966">
    <property type="term" value="C:mitochondrial membrane"/>
    <property type="evidence" value="ECO:0007669"/>
    <property type="project" value="UniProtKB-SubCell"/>
</dbReference>
<dbReference type="GO" id="GO:0045259">
    <property type="term" value="C:proton-transporting ATP synthase complex"/>
    <property type="evidence" value="ECO:0007669"/>
    <property type="project" value="UniProtKB-KW"/>
</dbReference>
<dbReference type="GO" id="GO:0015078">
    <property type="term" value="F:proton transmembrane transporter activity"/>
    <property type="evidence" value="ECO:0007669"/>
    <property type="project" value="InterPro"/>
</dbReference>
<dbReference type="GO" id="GO:0015986">
    <property type="term" value="P:proton motive force-driven ATP synthesis"/>
    <property type="evidence" value="ECO:0007669"/>
    <property type="project" value="InterPro"/>
</dbReference>
<dbReference type="InterPro" id="IPR001421">
    <property type="entry name" value="ATP8_metazoa"/>
</dbReference>
<dbReference type="InterPro" id="IPR050635">
    <property type="entry name" value="ATPase_protein_8"/>
</dbReference>
<dbReference type="PANTHER" id="PTHR39937">
    <property type="entry name" value="ATP SYNTHASE PROTEIN 8"/>
    <property type="match status" value="1"/>
</dbReference>
<dbReference type="PANTHER" id="PTHR39937:SF1">
    <property type="entry name" value="ATP SYNTHASE PROTEIN 8"/>
    <property type="match status" value="1"/>
</dbReference>
<dbReference type="Pfam" id="PF00895">
    <property type="entry name" value="ATP-synt_8"/>
    <property type="match status" value="1"/>
</dbReference>
<accession>P50682</accession>
<name>ATP8_COTJA</name>